<accession>B0UU57</accession>
<keyword id="KW-0030">Aminoacyl-tRNA synthetase</keyword>
<keyword id="KW-0067">ATP-binding</keyword>
<keyword id="KW-0963">Cytoplasm</keyword>
<keyword id="KW-0436">Ligase</keyword>
<keyword id="KW-0460">Magnesium</keyword>
<keyword id="KW-0479">Metal-binding</keyword>
<keyword id="KW-0547">Nucleotide-binding</keyword>
<keyword id="KW-0648">Protein biosynthesis</keyword>
<gene>
    <name evidence="1" type="primary">pheS</name>
    <name type="ordered locus">HSM_1334</name>
</gene>
<reference key="1">
    <citation type="submission" date="2008-02" db="EMBL/GenBank/DDBJ databases">
        <title>Complete sequence of Haemophilus somnus 2336.</title>
        <authorList>
            <consortium name="US DOE Joint Genome Institute"/>
            <person name="Siddaramappa S."/>
            <person name="Duncan A.J."/>
            <person name="Challacombe J.F."/>
            <person name="Rainey D."/>
            <person name="Gillaspy A.F."/>
            <person name="Carson M."/>
            <person name="Gipson J."/>
            <person name="Gipson M."/>
            <person name="Bruce D."/>
            <person name="Detter J.C."/>
            <person name="Han C.S."/>
            <person name="Land M."/>
            <person name="Tapia R."/>
            <person name="Thompson L.S."/>
            <person name="Orvis J."/>
            <person name="Zaitshik J."/>
            <person name="Barnes G."/>
            <person name="Brettin T.S."/>
            <person name="Dyer D.W."/>
            <person name="Inzana T.J."/>
        </authorList>
    </citation>
    <scope>NUCLEOTIDE SEQUENCE [LARGE SCALE GENOMIC DNA]</scope>
    <source>
        <strain>2336</strain>
    </source>
</reference>
<dbReference type="EC" id="6.1.1.20" evidence="1"/>
<dbReference type="EMBL" id="CP000947">
    <property type="protein sequence ID" value="ACA31070.1"/>
    <property type="molecule type" value="Genomic_DNA"/>
</dbReference>
<dbReference type="RefSeq" id="WP_012340490.1">
    <property type="nucleotide sequence ID" value="NC_010519.1"/>
</dbReference>
<dbReference type="SMR" id="B0UU57"/>
<dbReference type="STRING" id="228400.HSM_1334"/>
<dbReference type="GeneID" id="31487636"/>
<dbReference type="KEGG" id="hsm:HSM_1334"/>
<dbReference type="HOGENOM" id="CLU_025086_0_1_6"/>
<dbReference type="GO" id="GO:0005737">
    <property type="term" value="C:cytoplasm"/>
    <property type="evidence" value="ECO:0007669"/>
    <property type="project" value="UniProtKB-SubCell"/>
</dbReference>
<dbReference type="GO" id="GO:0005524">
    <property type="term" value="F:ATP binding"/>
    <property type="evidence" value="ECO:0007669"/>
    <property type="project" value="UniProtKB-UniRule"/>
</dbReference>
<dbReference type="GO" id="GO:0000287">
    <property type="term" value="F:magnesium ion binding"/>
    <property type="evidence" value="ECO:0007669"/>
    <property type="project" value="UniProtKB-UniRule"/>
</dbReference>
<dbReference type="GO" id="GO:0004826">
    <property type="term" value="F:phenylalanine-tRNA ligase activity"/>
    <property type="evidence" value="ECO:0007669"/>
    <property type="project" value="UniProtKB-UniRule"/>
</dbReference>
<dbReference type="GO" id="GO:0000049">
    <property type="term" value="F:tRNA binding"/>
    <property type="evidence" value="ECO:0007669"/>
    <property type="project" value="InterPro"/>
</dbReference>
<dbReference type="GO" id="GO:0006432">
    <property type="term" value="P:phenylalanyl-tRNA aminoacylation"/>
    <property type="evidence" value="ECO:0007669"/>
    <property type="project" value="UniProtKB-UniRule"/>
</dbReference>
<dbReference type="CDD" id="cd00496">
    <property type="entry name" value="PheRS_alpha_core"/>
    <property type="match status" value="1"/>
</dbReference>
<dbReference type="FunFam" id="3.30.930.10:FF:000003">
    <property type="entry name" value="Phenylalanine--tRNA ligase alpha subunit"/>
    <property type="match status" value="1"/>
</dbReference>
<dbReference type="Gene3D" id="3.30.930.10">
    <property type="entry name" value="Bira Bifunctional Protein, Domain 2"/>
    <property type="match status" value="1"/>
</dbReference>
<dbReference type="HAMAP" id="MF_00281">
    <property type="entry name" value="Phe_tRNA_synth_alpha1"/>
    <property type="match status" value="1"/>
</dbReference>
<dbReference type="InterPro" id="IPR006195">
    <property type="entry name" value="aa-tRNA-synth_II"/>
</dbReference>
<dbReference type="InterPro" id="IPR045864">
    <property type="entry name" value="aa-tRNA-synth_II/BPL/LPL"/>
</dbReference>
<dbReference type="InterPro" id="IPR004529">
    <property type="entry name" value="Phe-tRNA-synth_IIc_asu"/>
</dbReference>
<dbReference type="InterPro" id="IPR004188">
    <property type="entry name" value="Phe-tRNA_ligase_II_N"/>
</dbReference>
<dbReference type="InterPro" id="IPR022911">
    <property type="entry name" value="Phe_tRNA_ligase_alpha1_bac"/>
</dbReference>
<dbReference type="InterPro" id="IPR002319">
    <property type="entry name" value="Phenylalanyl-tRNA_Synthase"/>
</dbReference>
<dbReference type="InterPro" id="IPR010978">
    <property type="entry name" value="tRNA-bd_arm"/>
</dbReference>
<dbReference type="NCBIfam" id="TIGR00468">
    <property type="entry name" value="pheS"/>
    <property type="match status" value="1"/>
</dbReference>
<dbReference type="PANTHER" id="PTHR11538:SF41">
    <property type="entry name" value="PHENYLALANINE--TRNA LIGASE, MITOCHONDRIAL"/>
    <property type="match status" value="1"/>
</dbReference>
<dbReference type="PANTHER" id="PTHR11538">
    <property type="entry name" value="PHENYLALANYL-TRNA SYNTHETASE"/>
    <property type="match status" value="1"/>
</dbReference>
<dbReference type="Pfam" id="PF02912">
    <property type="entry name" value="Phe_tRNA-synt_N"/>
    <property type="match status" value="1"/>
</dbReference>
<dbReference type="Pfam" id="PF01409">
    <property type="entry name" value="tRNA-synt_2d"/>
    <property type="match status" value="1"/>
</dbReference>
<dbReference type="SUPFAM" id="SSF55681">
    <property type="entry name" value="Class II aaRS and biotin synthetases"/>
    <property type="match status" value="1"/>
</dbReference>
<dbReference type="SUPFAM" id="SSF46589">
    <property type="entry name" value="tRNA-binding arm"/>
    <property type="match status" value="1"/>
</dbReference>
<dbReference type="PROSITE" id="PS50862">
    <property type="entry name" value="AA_TRNA_LIGASE_II"/>
    <property type="match status" value="1"/>
</dbReference>
<feature type="chain" id="PRO_1000078842" description="Phenylalanine--tRNA ligase alpha subunit">
    <location>
        <begin position="1"/>
        <end position="329"/>
    </location>
</feature>
<feature type="binding site" evidence="1">
    <location>
        <position position="254"/>
    </location>
    <ligand>
        <name>Mg(2+)</name>
        <dbReference type="ChEBI" id="CHEBI:18420"/>
        <note>shared with beta subunit</note>
    </ligand>
</feature>
<name>SYFA_HISS2</name>
<evidence type="ECO:0000255" key="1">
    <source>
        <dbReference type="HAMAP-Rule" id="MF_00281"/>
    </source>
</evidence>
<protein>
    <recommendedName>
        <fullName evidence="1">Phenylalanine--tRNA ligase alpha subunit</fullName>
        <ecNumber evidence="1">6.1.1.20</ecNumber>
    </recommendedName>
    <alternativeName>
        <fullName evidence="1">Phenylalanyl-tRNA synthetase alpha subunit</fullName>
        <shortName evidence="1">PheRS</shortName>
    </alternativeName>
</protein>
<organism>
    <name type="scientific">Histophilus somni (strain 2336)</name>
    <name type="common">Haemophilus somnus</name>
    <dbReference type="NCBI Taxonomy" id="228400"/>
    <lineage>
        <taxon>Bacteria</taxon>
        <taxon>Pseudomonadati</taxon>
        <taxon>Pseudomonadota</taxon>
        <taxon>Gammaproteobacteria</taxon>
        <taxon>Pasteurellales</taxon>
        <taxon>Pasteurellaceae</taxon>
        <taxon>Histophilus</taxon>
    </lineage>
</organism>
<comment type="catalytic activity">
    <reaction evidence="1">
        <text>tRNA(Phe) + L-phenylalanine + ATP = L-phenylalanyl-tRNA(Phe) + AMP + diphosphate + H(+)</text>
        <dbReference type="Rhea" id="RHEA:19413"/>
        <dbReference type="Rhea" id="RHEA-COMP:9668"/>
        <dbReference type="Rhea" id="RHEA-COMP:9699"/>
        <dbReference type="ChEBI" id="CHEBI:15378"/>
        <dbReference type="ChEBI" id="CHEBI:30616"/>
        <dbReference type="ChEBI" id="CHEBI:33019"/>
        <dbReference type="ChEBI" id="CHEBI:58095"/>
        <dbReference type="ChEBI" id="CHEBI:78442"/>
        <dbReference type="ChEBI" id="CHEBI:78531"/>
        <dbReference type="ChEBI" id="CHEBI:456215"/>
        <dbReference type="EC" id="6.1.1.20"/>
    </reaction>
</comment>
<comment type="cofactor">
    <cofactor evidence="1">
        <name>Mg(2+)</name>
        <dbReference type="ChEBI" id="CHEBI:18420"/>
    </cofactor>
    <text evidence="1">Binds 2 magnesium ions per tetramer.</text>
</comment>
<comment type="subunit">
    <text evidence="1">Tetramer of two alpha and two beta subunits.</text>
</comment>
<comment type="subcellular location">
    <subcellularLocation>
        <location evidence="1">Cytoplasm</location>
    </subcellularLocation>
</comment>
<comment type="similarity">
    <text evidence="1">Belongs to the class-II aminoacyl-tRNA synthetase family. Phe-tRNA synthetase alpha subunit type 1 subfamily.</text>
</comment>
<proteinExistence type="inferred from homology"/>
<sequence length="329" mass="38052">MYNLQEITEEARKAIEALQDKSIESLEAIRVEYFGKKGHFTQLMQGLRDVSAEERPAVGAKINEAKQKVQAILNAKKVEWEEIALNERLAQERIDVSLPGRKMELGGLHPVSITINRVVQFFSKLGFTVEIGPEIETDYYNFDALNIPKHHPARADHDTFWFDAERLLRTQTSGVQIRTMEKMCPPIRIMAPGKVYRNDYDQTHTPMFHQIELLYVDKKANFTELKGLLHDFLRAFFEEDLQVRFRPSYFPFTEPSAEVDVMGKNGKWLEVLGCGMVHPNVLRNVGIDPNEYSGFAVGMGVERLTMLRYNVTDLRSFFENDLRFLKQFK</sequence>